<protein>
    <recommendedName>
        <fullName evidence="5">Serine/threonine-protein phosphatase sitA</fullName>
        <ecNumber evidence="2">3.1.3.16</ecNumber>
    </recommendedName>
</protein>
<comment type="function">
    <text evidence="4">Protein phosphatase that acts as a modulator of pkcA/mpkA activity involved in the cell wall integrity pathway (PubMed:25911225). Plays an important role in regulation of adhesion, cell wall integrity, biofilm formation, and virulence (PubMed:25911225).</text>
</comment>
<comment type="catalytic activity">
    <reaction evidence="2">
        <text>O-phospho-L-threonyl-[protein] + H2O = L-threonyl-[protein] + phosphate</text>
        <dbReference type="Rhea" id="RHEA:47004"/>
        <dbReference type="Rhea" id="RHEA-COMP:11060"/>
        <dbReference type="Rhea" id="RHEA-COMP:11605"/>
        <dbReference type="ChEBI" id="CHEBI:15377"/>
        <dbReference type="ChEBI" id="CHEBI:30013"/>
        <dbReference type="ChEBI" id="CHEBI:43474"/>
        <dbReference type="ChEBI" id="CHEBI:61977"/>
        <dbReference type="EC" id="3.1.3.16"/>
    </reaction>
</comment>
<comment type="cofactor">
    <cofactor evidence="1">
        <name>Mn(2+)</name>
        <dbReference type="ChEBI" id="CHEBI:29035"/>
    </cofactor>
    <text evidence="1">Binds 2 manganese ions per subunit.</text>
</comment>
<comment type="disruption phenotype">
    <text evidence="4">Leads to decreased mpkA phosphorylation levels, increased sensitivity to cell wall-damaging agents, increased levels of beta-(1,3)-glucan and chitin, impaired in biofilm formation, and decreased protein kinase C activity (PubMed:25911225). Also increases sensitivity to several metals and ions, such as MnCl(2), CaCl(2), and LiCl, but it is more resistant to ZnSO(4) (PubMed:25911225). Impeairs the virulencein a murine model of invasive pulmonary aspergillosis and induces an augmented tumor necrosis factor alpha response in mouse macrophages (PubMed:25911225).</text>
</comment>
<comment type="similarity">
    <text evidence="6">Belongs to the PPP phosphatase family. PP-6 (PP-V) subfamily.</text>
</comment>
<dbReference type="EC" id="3.1.3.16" evidence="2"/>
<dbReference type="EMBL" id="AAHF01000006">
    <property type="protein sequence ID" value="EAL88992.2"/>
    <property type="molecule type" value="Genomic_DNA"/>
</dbReference>
<dbReference type="RefSeq" id="XP_751030.2">
    <property type="nucleotide sequence ID" value="XM_745937.2"/>
</dbReference>
<dbReference type="SMR" id="Q4WM22"/>
<dbReference type="FunCoup" id="Q4WM22">
    <property type="interactions" value="885"/>
</dbReference>
<dbReference type="STRING" id="330879.Q4WM22"/>
<dbReference type="EnsemblFungi" id="EAL88992">
    <property type="protein sequence ID" value="EAL88992"/>
    <property type="gene ID" value="AFUA_6G11470"/>
</dbReference>
<dbReference type="GeneID" id="3508335"/>
<dbReference type="KEGG" id="afm:AFUA_6G11470"/>
<dbReference type="VEuPathDB" id="FungiDB:Afu6g11470"/>
<dbReference type="eggNOG" id="KOG0373">
    <property type="taxonomic scope" value="Eukaryota"/>
</dbReference>
<dbReference type="HOGENOM" id="CLU_004962_8_3_1"/>
<dbReference type="InParanoid" id="Q4WM22"/>
<dbReference type="OMA" id="MCLKVKY"/>
<dbReference type="OrthoDB" id="1930084at2759"/>
<dbReference type="Proteomes" id="UP000002530">
    <property type="component" value="Chromosome 6"/>
</dbReference>
<dbReference type="GO" id="GO:0000785">
    <property type="term" value="C:chromatin"/>
    <property type="evidence" value="ECO:0007669"/>
    <property type="project" value="EnsemblFungi"/>
</dbReference>
<dbReference type="GO" id="GO:0005737">
    <property type="term" value="C:cytoplasm"/>
    <property type="evidence" value="ECO:0000318"/>
    <property type="project" value="GO_Central"/>
</dbReference>
<dbReference type="GO" id="GO:0000159">
    <property type="term" value="C:protein phosphatase type 2A complex"/>
    <property type="evidence" value="ECO:0007669"/>
    <property type="project" value="EnsemblFungi"/>
</dbReference>
<dbReference type="GO" id="GO:0046872">
    <property type="term" value="F:metal ion binding"/>
    <property type="evidence" value="ECO:0007669"/>
    <property type="project" value="UniProtKB-KW"/>
</dbReference>
<dbReference type="GO" id="GO:0004722">
    <property type="term" value="F:protein serine/threonine phosphatase activity"/>
    <property type="evidence" value="ECO:0000318"/>
    <property type="project" value="GO_Central"/>
</dbReference>
<dbReference type="GO" id="GO:0043708">
    <property type="term" value="P:cell adhesion involved in biofilm formation"/>
    <property type="evidence" value="ECO:0000315"/>
    <property type="project" value="AspGD"/>
</dbReference>
<dbReference type="GO" id="GO:0034599">
    <property type="term" value="P:cellular response to oxidative stress"/>
    <property type="evidence" value="ECO:0007669"/>
    <property type="project" value="EnsemblFungi"/>
</dbReference>
<dbReference type="GO" id="GO:0006281">
    <property type="term" value="P:DNA repair"/>
    <property type="evidence" value="ECO:0007669"/>
    <property type="project" value="EnsemblFungi"/>
</dbReference>
<dbReference type="GO" id="GO:0031505">
    <property type="term" value="P:fungal-type cell wall organization"/>
    <property type="evidence" value="ECO:0000315"/>
    <property type="project" value="AspGD"/>
</dbReference>
<dbReference type="GO" id="GO:0000082">
    <property type="term" value="P:G1/S transition of mitotic cell cycle"/>
    <property type="evidence" value="ECO:0000318"/>
    <property type="project" value="GO_Central"/>
</dbReference>
<dbReference type="GO" id="GO:0035556">
    <property type="term" value="P:intracellular signal transduction"/>
    <property type="evidence" value="ECO:0007669"/>
    <property type="project" value="EnsemblFungi"/>
</dbReference>
<dbReference type="GO" id="GO:2001211">
    <property type="term" value="P:negative regulation of isopentenyl diphosphate biosynthetic process, mevalonate pathway"/>
    <property type="evidence" value="ECO:0007669"/>
    <property type="project" value="EnsemblFungi"/>
</dbReference>
<dbReference type="GO" id="GO:0032956">
    <property type="term" value="P:regulation of actin cytoskeleton organization"/>
    <property type="evidence" value="ECO:0007669"/>
    <property type="project" value="EnsemblFungi"/>
</dbReference>
<dbReference type="GO" id="GO:0060237">
    <property type="term" value="P:regulation of fungal-type cell wall organization"/>
    <property type="evidence" value="ECO:0007669"/>
    <property type="project" value="EnsemblFungi"/>
</dbReference>
<dbReference type="GO" id="GO:1903432">
    <property type="term" value="P:regulation of TORC1 signaling"/>
    <property type="evidence" value="ECO:0007669"/>
    <property type="project" value="EnsemblFungi"/>
</dbReference>
<dbReference type="GO" id="GO:0002098">
    <property type="term" value="P:tRNA wobble uridine modification"/>
    <property type="evidence" value="ECO:0007669"/>
    <property type="project" value="EnsemblFungi"/>
</dbReference>
<dbReference type="Gene3D" id="3.60.21.10">
    <property type="match status" value="1"/>
</dbReference>
<dbReference type="InterPro" id="IPR004843">
    <property type="entry name" value="Calcineurin-like_PHP_ApaH"/>
</dbReference>
<dbReference type="InterPro" id="IPR029052">
    <property type="entry name" value="Metallo-depent_PP-like"/>
</dbReference>
<dbReference type="InterPro" id="IPR047129">
    <property type="entry name" value="PPA2-like"/>
</dbReference>
<dbReference type="InterPro" id="IPR006186">
    <property type="entry name" value="Ser/Thr-sp_prot-phosphatase"/>
</dbReference>
<dbReference type="PANTHER" id="PTHR45619">
    <property type="entry name" value="SERINE/THREONINE-PROTEIN PHOSPHATASE PP2A-RELATED"/>
    <property type="match status" value="1"/>
</dbReference>
<dbReference type="Pfam" id="PF00149">
    <property type="entry name" value="Metallophos"/>
    <property type="match status" value="1"/>
</dbReference>
<dbReference type="PIRSF" id="PIRSF033096">
    <property type="entry name" value="PPPtase_5"/>
    <property type="match status" value="1"/>
</dbReference>
<dbReference type="PRINTS" id="PR00114">
    <property type="entry name" value="STPHPHTASE"/>
</dbReference>
<dbReference type="SMART" id="SM00156">
    <property type="entry name" value="PP2Ac"/>
    <property type="match status" value="1"/>
</dbReference>
<dbReference type="SUPFAM" id="SSF56300">
    <property type="entry name" value="Metallo-dependent phosphatases"/>
    <property type="match status" value="1"/>
</dbReference>
<dbReference type="PROSITE" id="PS00125">
    <property type="entry name" value="SER_THR_PHOSPHATASE"/>
    <property type="match status" value="1"/>
</dbReference>
<gene>
    <name evidence="5" type="primary">sitA</name>
    <name type="ORF">AFUA_6G11470</name>
</gene>
<name>SITA_ASPFU</name>
<feature type="chain" id="PRO_0000453182" description="Serine/threonine-protein phosphatase sitA">
    <location>
        <begin position="1"/>
        <end position="388"/>
    </location>
</feature>
<feature type="region of interest" description="Disordered" evidence="3">
    <location>
        <begin position="86"/>
        <end position="146"/>
    </location>
</feature>
<feature type="active site" description="Proton donor" evidence="1">
    <location>
        <position position="194"/>
    </location>
</feature>
<feature type="binding site" evidence="1">
    <location>
        <position position="67"/>
    </location>
    <ligand>
        <name>Mn(2+)</name>
        <dbReference type="ChEBI" id="CHEBI:29035"/>
        <label>1</label>
    </ligand>
</feature>
<feature type="binding site" evidence="1">
    <location>
        <position position="69"/>
    </location>
    <ligand>
        <name>Mn(2+)</name>
        <dbReference type="ChEBI" id="CHEBI:29035"/>
        <label>1</label>
    </ligand>
</feature>
<feature type="binding site" evidence="1">
    <location>
        <position position="161"/>
    </location>
    <ligand>
        <name>Mn(2+)</name>
        <dbReference type="ChEBI" id="CHEBI:29035"/>
        <label>1</label>
    </ligand>
</feature>
<feature type="binding site" evidence="1">
    <location>
        <position position="161"/>
    </location>
    <ligand>
        <name>Mn(2+)</name>
        <dbReference type="ChEBI" id="CHEBI:29035"/>
        <label>2</label>
    </ligand>
</feature>
<feature type="binding site" evidence="1">
    <location>
        <position position="193"/>
    </location>
    <ligand>
        <name>Mn(2+)</name>
        <dbReference type="ChEBI" id="CHEBI:29035"/>
        <label>2</label>
    </ligand>
</feature>
<feature type="binding site" evidence="1">
    <location>
        <position position="243"/>
    </location>
    <ligand>
        <name>Mn(2+)</name>
        <dbReference type="ChEBI" id="CHEBI:29035"/>
        <label>2</label>
    </ligand>
</feature>
<feature type="binding site" evidence="1">
    <location>
        <position position="317"/>
    </location>
    <ligand>
        <name>Mn(2+)</name>
        <dbReference type="ChEBI" id="CHEBI:29035"/>
        <label>2</label>
    </ligand>
</feature>
<proteinExistence type="inferred from homology"/>
<reference key="1">
    <citation type="journal article" date="2005" name="Nature">
        <title>Genomic sequence of the pathogenic and allergenic filamentous fungus Aspergillus fumigatus.</title>
        <authorList>
            <person name="Nierman W.C."/>
            <person name="Pain A."/>
            <person name="Anderson M.J."/>
            <person name="Wortman J.R."/>
            <person name="Kim H.S."/>
            <person name="Arroyo J."/>
            <person name="Berriman M."/>
            <person name="Abe K."/>
            <person name="Archer D.B."/>
            <person name="Bermejo C."/>
            <person name="Bennett J.W."/>
            <person name="Bowyer P."/>
            <person name="Chen D."/>
            <person name="Collins M."/>
            <person name="Coulsen R."/>
            <person name="Davies R."/>
            <person name="Dyer P.S."/>
            <person name="Farman M.L."/>
            <person name="Fedorova N."/>
            <person name="Fedorova N.D."/>
            <person name="Feldblyum T.V."/>
            <person name="Fischer R."/>
            <person name="Fosker N."/>
            <person name="Fraser A."/>
            <person name="Garcia J.L."/>
            <person name="Garcia M.J."/>
            <person name="Goble A."/>
            <person name="Goldman G.H."/>
            <person name="Gomi K."/>
            <person name="Griffith-Jones S."/>
            <person name="Gwilliam R."/>
            <person name="Haas B.J."/>
            <person name="Haas H."/>
            <person name="Harris D.E."/>
            <person name="Horiuchi H."/>
            <person name="Huang J."/>
            <person name="Humphray S."/>
            <person name="Jimenez J."/>
            <person name="Keller N."/>
            <person name="Khouri H."/>
            <person name="Kitamoto K."/>
            <person name="Kobayashi T."/>
            <person name="Konzack S."/>
            <person name="Kulkarni R."/>
            <person name="Kumagai T."/>
            <person name="Lafton A."/>
            <person name="Latge J.-P."/>
            <person name="Li W."/>
            <person name="Lord A."/>
            <person name="Lu C."/>
            <person name="Majoros W.H."/>
            <person name="May G.S."/>
            <person name="Miller B.L."/>
            <person name="Mohamoud Y."/>
            <person name="Molina M."/>
            <person name="Monod M."/>
            <person name="Mouyna I."/>
            <person name="Mulligan S."/>
            <person name="Murphy L.D."/>
            <person name="O'Neil S."/>
            <person name="Paulsen I."/>
            <person name="Penalva M.A."/>
            <person name="Pertea M."/>
            <person name="Price C."/>
            <person name="Pritchard B.L."/>
            <person name="Quail M.A."/>
            <person name="Rabbinowitsch E."/>
            <person name="Rawlins N."/>
            <person name="Rajandream M.A."/>
            <person name="Reichard U."/>
            <person name="Renauld H."/>
            <person name="Robson G.D."/>
            <person name="Rodriguez de Cordoba S."/>
            <person name="Rodriguez-Pena J.M."/>
            <person name="Ronning C.M."/>
            <person name="Rutter S."/>
            <person name="Salzberg S.L."/>
            <person name="Sanchez M."/>
            <person name="Sanchez-Ferrero J.C."/>
            <person name="Saunders D."/>
            <person name="Seeger K."/>
            <person name="Squares R."/>
            <person name="Squares S."/>
            <person name="Takeuchi M."/>
            <person name="Tekaia F."/>
            <person name="Turner G."/>
            <person name="Vazquez de Aldana C.R."/>
            <person name="Weidman J."/>
            <person name="White O."/>
            <person name="Woodward J.R."/>
            <person name="Yu J.-H."/>
            <person name="Fraser C.M."/>
            <person name="Galagan J.E."/>
            <person name="Asai K."/>
            <person name="Machida M."/>
            <person name="Hall N."/>
            <person name="Barrell B.G."/>
            <person name="Denning D.W."/>
        </authorList>
    </citation>
    <scope>NUCLEOTIDE SEQUENCE [LARGE SCALE GENOMIC DNA]</scope>
    <source>
        <strain>ATCC MYA-4609 / CBS 101355 / FGSC A1100 / Af293</strain>
    </source>
</reference>
<reference key="2">
    <citation type="journal article" date="2015" name="Eukaryot. Cell">
        <title>The Aspergillus fumigatus sitA phosphatase homologue is important for adhesion, cell wall integrity, biofilm formation, and virulence.</title>
        <authorList>
            <person name="Bom V.L."/>
            <person name="de Castro P.A."/>
            <person name="Winkelstroeter L.K."/>
            <person name="Marine M."/>
            <person name="Hori J.I."/>
            <person name="Ramalho L.N."/>
            <person name="dos Reis T.F."/>
            <person name="Goldman M.H."/>
            <person name="Brown N.A."/>
            <person name="Rajendran R."/>
            <person name="Ramage G."/>
            <person name="Walker L.A."/>
            <person name="Munro C.A."/>
            <person name="Rocha M.C."/>
            <person name="Malavazi I."/>
            <person name="Hagiwara D."/>
            <person name="Goldman G.H."/>
        </authorList>
    </citation>
    <scope>FUNCTION</scope>
    <scope>DISRUPTION PHENOTYPE</scope>
</reference>
<accession>Q4WM22</accession>
<organism>
    <name type="scientific">Aspergillus fumigatus (strain ATCC MYA-4609 / CBS 101355 / FGSC A1100 / Af293)</name>
    <name type="common">Neosartorya fumigata</name>
    <dbReference type="NCBI Taxonomy" id="330879"/>
    <lineage>
        <taxon>Eukaryota</taxon>
        <taxon>Fungi</taxon>
        <taxon>Dikarya</taxon>
        <taxon>Ascomycota</taxon>
        <taxon>Pezizomycotina</taxon>
        <taxon>Eurotiomycetes</taxon>
        <taxon>Eurotiomycetidae</taxon>
        <taxon>Eurotiales</taxon>
        <taxon>Aspergillaceae</taxon>
        <taxon>Aspergillus</taxon>
        <taxon>Aspergillus subgen. Fumigati</taxon>
    </lineage>
</organism>
<sequence length="388" mass="43535">MVDNKIPEPGPAKLKRNAGPDEWLEAAKDCKYLSEQHMKQLCEIVKEYMMEESNIQPVSTPVTICGDIHGQFYDLLELFRVSGGMPDGSEAEAPKTQSAVITSDDIEPPSTISDPKLRKKLRNTFAPEDGSEDSSASQRDRSSSSGSRDVELKRNFVFLGDYVDRGYFSLETLTLLLCLKAKYPDRVTLVRGNHESRQITQVYGFYEECFQKYGNASVWKACCQVFDFMTLGAIIDGRVLCVHGGLSPEIRTLDQVRVVARAQEIPHEGAFCDLVWSDPDDVETWAVSPRGAGWLFGDKVADEFCHVNDLTLIARAHQLVNEGYKYHFANQNVVTVWSAPNYCYRCGNLASVCEIGDDLKPTFKLFSAVSDDQRHVPVSRPGRSEYFL</sequence>
<keyword id="KW-0378">Hydrolase</keyword>
<keyword id="KW-0464">Manganese</keyword>
<keyword id="KW-0479">Metal-binding</keyword>
<keyword id="KW-1185">Reference proteome</keyword>
<keyword id="KW-0843">Virulence</keyword>
<evidence type="ECO:0000250" key="1">
    <source>
        <dbReference type="UniProtKB" id="P67775"/>
    </source>
</evidence>
<evidence type="ECO:0000255" key="2">
    <source>
        <dbReference type="RuleBase" id="RU004273"/>
    </source>
</evidence>
<evidence type="ECO:0000256" key="3">
    <source>
        <dbReference type="SAM" id="MobiDB-lite"/>
    </source>
</evidence>
<evidence type="ECO:0000269" key="4">
    <source>
    </source>
</evidence>
<evidence type="ECO:0000303" key="5">
    <source>
    </source>
</evidence>
<evidence type="ECO:0000305" key="6"/>